<comment type="function">
    <text evidence="1">This is one of the proteins that binds to the 5S RNA in the ribosome where it forms part of the central protuberance.</text>
</comment>
<comment type="subunit">
    <text evidence="1">Part of the 50S ribosomal subunit; part of the 5S rRNA/L5/L18/L25 subcomplex. Contacts the 5S rRNA. Binds to the 5S rRNA independently of L5 and L18.</text>
</comment>
<comment type="similarity">
    <text evidence="1">Belongs to the bacterial ribosomal protein bL25 family. CTC subfamily.</text>
</comment>
<organism>
    <name type="scientific">Rhizorhabdus wittichii (strain DSM 6014 / CCUG 31198 / JCM 15750 / NBRC 105917 / EY 4224 / RW1)</name>
    <name type="common">Sphingomonas wittichii</name>
    <dbReference type="NCBI Taxonomy" id="392499"/>
    <lineage>
        <taxon>Bacteria</taxon>
        <taxon>Pseudomonadati</taxon>
        <taxon>Pseudomonadota</taxon>
        <taxon>Alphaproteobacteria</taxon>
        <taxon>Sphingomonadales</taxon>
        <taxon>Sphingomonadaceae</taxon>
        <taxon>Rhizorhabdus</taxon>
    </lineage>
</organism>
<keyword id="KW-1185">Reference proteome</keyword>
<keyword id="KW-0687">Ribonucleoprotein</keyword>
<keyword id="KW-0689">Ribosomal protein</keyword>
<keyword id="KW-0694">RNA-binding</keyword>
<keyword id="KW-0699">rRNA-binding</keyword>
<accession>A5V625</accession>
<name>RL25_RHIWR</name>
<sequence>MSEVLDLSAEARERAGKGASRAIRREGRVPAVIYGEKQEPASIHVEEKVLMKLLHTGHFFNSVVMLDVGGKKVRTLPKDVQFHPVTDRPLHVDFLRIGEHTKVNVNVPVHFKDEELSPGLKRGGVLNVVIHDLGLSVDAAEIPEEIVISLKGLEVGESIHLSQVALPKGASAQDHEDITIATIVAPSALKSAEGEEAAEAGEEAAEG</sequence>
<proteinExistence type="inferred from homology"/>
<evidence type="ECO:0000255" key="1">
    <source>
        <dbReference type="HAMAP-Rule" id="MF_01334"/>
    </source>
</evidence>
<evidence type="ECO:0000305" key="2"/>
<protein>
    <recommendedName>
        <fullName evidence="1">Large ribosomal subunit protein bL25</fullName>
    </recommendedName>
    <alternativeName>
        <fullName evidence="2">50S ribosomal protein L25</fullName>
    </alternativeName>
    <alternativeName>
        <fullName evidence="1">General stress protein CTC</fullName>
    </alternativeName>
</protein>
<reference key="1">
    <citation type="journal article" date="2010" name="J. Bacteriol.">
        <title>Genome sequence of the dioxin-mineralizing bacterium Sphingomonas wittichii RW1.</title>
        <authorList>
            <person name="Miller T.R."/>
            <person name="Delcher A.L."/>
            <person name="Salzberg S.L."/>
            <person name="Saunders E."/>
            <person name="Detter J.C."/>
            <person name="Halden R.U."/>
        </authorList>
    </citation>
    <scope>NUCLEOTIDE SEQUENCE [LARGE SCALE GENOMIC DNA]</scope>
    <source>
        <strain>DSM 6014 / CCUG 31198 / JCM 15750 / NBRC 105917 / EY 4224 / RW1</strain>
    </source>
</reference>
<gene>
    <name evidence="1" type="primary">rplY</name>
    <name evidence="1" type="synonym">ctc</name>
    <name type="ordered locus">Swit_1377</name>
</gene>
<feature type="chain" id="PRO_1000052939" description="Large ribosomal subunit protein bL25">
    <location>
        <begin position="1"/>
        <end position="207"/>
    </location>
</feature>
<dbReference type="EMBL" id="CP000699">
    <property type="protein sequence ID" value="ABQ67741.1"/>
    <property type="molecule type" value="Genomic_DNA"/>
</dbReference>
<dbReference type="SMR" id="A5V625"/>
<dbReference type="STRING" id="392499.Swit_1377"/>
<dbReference type="PaxDb" id="392499-Swit_1377"/>
<dbReference type="KEGG" id="swi:Swit_1377"/>
<dbReference type="eggNOG" id="COG1825">
    <property type="taxonomic scope" value="Bacteria"/>
</dbReference>
<dbReference type="HOGENOM" id="CLU_075939_0_0_5"/>
<dbReference type="OrthoDB" id="9806411at2"/>
<dbReference type="Proteomes" id="UP000001989">
    <property type="component" value="Chromosome"/>
</dbReference>
<dbReference type="GO" id="GO:0022625">
    <property type="term" value="C:cytosolic large ribosomal subunit"/>
    <property type="evidence" value="ECO:0007669"/>
    <property type="project" value="TreeGrafter"/>
</dbReference>
<dbReference type="GO" id="GO:0008097">
    <property type="term" value="F:5S rRNA binding"/>
    <property type="evidence" value="ECO:0007669"/>
    <property type="project" value="InterPro"/>
</dbReference>
<dbReference type="GO" id="GO:0003735">
    <property type="term" value="F:structural constituent of ribosome"/>
    <property type="evidence" value="ECO:0007669"/>
    <property type="project" value="InterPro"/>
</dbReference>
<dbReference type="GO" id="GO:0006412">
    <property type="term" value="P:translation"/>
    <property type="evidence" value="ECO:0007669"/>
    <property type="project" value="UniProtKB-UniRule"/>
</dbReference>
<dbReference type="CDD" id="cd00495">
    <property type="entry name" value="Ribosomal_L25_TL5_CTC"/>
    <property type="match status" value="1"/>
</dbReference>
<dbReference type="Gene3D" id="2.170.120.20">
    <property type="entry name" value="Ribosomal protein L25, beta domain"/>
    <property type="match status" value="1"/>
</dbReference>
<dbReference type="Gene3D" id="2.40.240.10">
    <property type="entry name" value="Ribosomal Protein L25, Chain P"/>
    <property type="match status" value="1"/>
</dbReference>
<dbReference type="HAMAP" id="MF_01336">
    <property type="entry name" value="Ribosomal_bL25"/>
    <property type="match status" value="1"/>
</dbReference>
<dbReference type="HAMAP" id="MF_01334">
    <property type="entry name" value="Ribosomal_bL25_CTC"/>
    <property type="match status" value="1"/>
</dbReference>
<dbReference type="InterPro" id="IPR020056">
    <property type="entry name" value="Rbsml_bL25/Gln-tRNA_synth_N"/>
</dbReference>
<dbReference type="InterPro" id="IPR011035">
    <property type="entry name" value="Ribosomal_bL25/Gln-tRNA_synth"/>
</dbReference>
<dbReference type="InterPro" id="IPR020057">
    <property type="entry name" value="Ribosomal_bL25_b-dom"/>
</dbReference>
<dbReference type="InterPro" id="IPR037121">
    <property type="entry name" value="Ribosomal_bL25_C"/>
</dbReference>
<dbReference type="InterPro" id="IPR001021">
    <property type="entry name" value="Ribosomal_bL25_long"/>
</dbReference>
<dbReference type="InterPro" id="IPR020055">
    <property type="entry name" value="Ribosomal_bL25_short"/>
</dbReference>
<dbReference type="InterPro" id="IPR029751">
    <property type="entry name" value="Ribosomal_L25_dom"/>
</dbReference>
<dbReference type="InterPro" id="IPR020930">
    <property type="entry name" value="Ribosomal_uL5_bac-type"/>
</dbReference>
<dbReference type="NCBIfam" id="TIGR00731">
    <property type="entry name" value="bL25_bact_ctc"/>
    <property type="match status" value="1"/>
</dbReference>
<dbReference type="NCBIfam" id="NF004128">
    <property type="entry name" value="PRK05618.1-2"/>
    <property type="match status" value="1"/>
</dbReference>
<dbReference type="NCBIfam" id="NF004612">
    <property type="entry name" value="PRK05943.1"/>
    <property type="match status" value="1"/>
</dbReference>
<dbReference type="PANTHER" id="PTHR33284">
    <property type="entry name" value="RIBOSOMAL PROTEIN L25/GLN-TRNA SYNTHETASE, ANTI-CODON-BINDING DOMAIN-CONTAINING PROTEIN"/>
    <property type="match status" value="1"/>
</dbReference>
<dbReference type="PANTHER" id="PTHR33284:SF1">
    <property type="entry name" value="RIBOSOMAL PROTEIN L25_GLN-TRNA SYNTHETASE, ANTI-CODON-BINDING DOMAIN-CONTAINING PROTEIN"/>
    <property type="match status" value="1"/>
</dbReference>
<dbReference type="Pfam" id="PF01386">
    <property type="entry name" value="Ribosomal_L25p"/>
    <property type="match status" value="1"/>
</dbReference>
<dbReference type="Pfam" id="PF14693">
    <property type="entry name" value="Ribosomal_TL5_C"/>
    <property type="match status" value="1"/>
</dbReference>
<dbReference type="SUPFAM" id="SSF50715">
    <property type="entry name" value="Ribosomal protein L25-like"/>
    <property type="match status" value="1"/>
</dbReference>